<keyword id="KW-0025">Alternative splicing</keyword>
<keyword id="KW-0175">Coiled coil</keyword>
<keyword id="KW-0227">DNA damage</keyword>
<keyword id="KW-0233">DNA recombination</keyword>
<keyword id="KW-0234">DNA repair</keyword>
<keyword id="KW-1017">Isopeptide bond</keyword>
<keyword id="KW-0539">Nucleus</keyword>
<keyword id="KW-1267">Proteomics identification</keyword>
<keyword id="KW-1185">Reference proteome</keyword>
<keyword id="KW-0804">Transcription</keyword>
<keyword id="KW-0805">Transcription regulation</keyword>
<keyword id="KW-0832">Ubl conjugation</keyword>
<proteinExistence type="evidence at protein level"/>
<reference key="1">
    <citation type="submission" date="2002-12" db="EMBL/GenBank/DDBJ databases">
        <title>Novel human cDNA clones with function of inhibiting growth of liver cancer cells.</title>
        <authorList>
            <person name="Wan D.F."/>
            <person name="Qin W.X."/>
            <person name="Zhou X.M."/>
            <person name="Zhang P.P."/>
            <person name="Jiang H.Q."/>
            <person name="Gu J.R."/>
        </authorList>
    </citation>
    <scope>NUCLEOTIDE SEQUENCE [MRNA] (ISOFORM 2)</scope>
</reference>
<reference key="2">
    <citation type="journal article" date="2004" name="Nat. Genet.">
        <title>Complete sequencing and characterization of 21,243 full-length human cDNAs.</title>
        <authorList>
            <person name="Ota T."/>
            <person name="Suzuki Y."/>
            <person name="Nishikawa T."/>
            <person name="Otsuki T."/>
            <person name="Sugiyama T."/>
            <person name="Irie R."/>
            <person name="Wakamatsu A."/>
            <person name="Hayashi K."/>
            <person name="Sato H."/>
            <person name="Nagai K."/>
            <person name="Kimura K."/>
            <person name="Makita H."/>
            <person name="Sekine M."/>
            <person name="Obayashi M."/>
            <person name="Nishi T."/>
            <person name="Shibahara T."/>
            <person name="Tanaka T."/>
            <person name="Ishii S."/>
            <person name="Yamamoto J."/>
            <person name="Saito K."/>
            <person name="Kawai Y."/>
            <person name="Isono Y."/>
            <person name="Nakamura Y."/>
            <person name="Nagahari K."/>
            <person name="Murakami K."/>
            <person name="Yasuda T."/>
            <person name="Iwayanagi T."/>
            <person name="Wagatsuma M."/>
            <person name="Shiratori A."/>
            <person name="Sudo H."/>
            <person name="Hosoiri T."/>
            <person name="Kaku Y."/>
            <person name="Kodaira H."/>
            <person name="Kondo H."/>
            <person name="Sugawara M."/>
            <person name="Takahashi M."/>
            <person name="Kanda K."/>
            <person name="Yokoi T."/>
            <person name="Furuya T."/>
            <person name="Kikkawa E."/>
            <person name="Omura Y."/>
            <person name="Abe K."/>
            <person name="Kamihara K."/>
            <person name="Katsuta N."/>
            <person name="Sato K."/>
            <person name="Tanikawa M."/>
            <person name="Yamazaki M."/>
            <person name="Ninomiya K."/>
            <person name="Ishibashi T."/>
            <person name="Yamashita H."/>
            <person name="Murakawa K."/>
            <person name="Fujimori K."/>
            <person name="Tanai H."/>
            <person name="Kimata M."/>
            <person name="Watanabe M."/>
            <person name="Hiraoka S."/>
            <person name="Chiba Y."/>
            <person name="Ishida S."/>
            <person name="Ono Y."/>
            <person name="Takiguchi S."/>
            <person name="Watanabe S."/>
            <person name="Yosida M."/>
            <person name="Hotuta T."/>
            <person name="Kusano J."/>
            <person name="Kanehori K."/>
            <person name="Takahashi-Fujii A."/>
            <person name="Hara H."/>
            <person name="Tanase T.-O."/>
            <person name="Nomura Y."/>
            <person name="Togiya S."/>
            <person name="Komai F."/>
            <person name="Hara R."/>
            <person name="Takeuchi K."/>
            <person name="Arita M."/>
            <person name="Imose N."/>
            <person name="Musashino K."/>
            <person name="Yuuki H."/>
            <person name="Oshima A."/>
            <person name="Sasaki N."/>
            <person name="Aotsuka S."/>
            <person name="Yoshikawa Y."/>
            <person name="Matsunawa H."/>
            <person name="Ichihara T."/>
            <person name="Shiohata N."/>
            <person name="Sano S."/>
            <person name="Moriya S."/>
            <person name="Momiyama H."/>
            <person name="Satoh N."/>
            <person name="Takami S."/>
            <person name="Terashima Y."/>
            <person name="Suzuki O."/>
            <person name="Nakagawa S."/>
            <person name="Senoh A."/>
            <person name="Mizoguchi H."/>
            <person name="Goto Y."/>
            <person name="Shimizu F."/>
            <person name="Wakebe H."/>
            <person name="Hishigaki H."/>
            <person name="Watanabe T."/>
            <person name="Sugiyama A."/>
            <person name="Takemoto M."/>
            <person name="Kawakami B."/>
            <person name="Yamazaki M."/>
            <person name="Watanabe K."/>
            <person name="Kumagai A."/>
            <person name="Itakura S."/>
            <person name="Fukuzumi Y."/>
            <person name="Fujimori Y."/>
            <person name="Komiyama M."/>
            <person name="Tashiro H."/>
            <person name="Tanigami A."/>
            <person name="Fujiwara T."/>
            <person name="Ono T."/>
            <person name="Yamada K."/>
            <person name="Fujii Y."/>
            <person name="Ozaki K."/>
            <person name="Hirao M."/>
            <person name="Ohmori Y."/>
            <person name="Kawabata A."/>
            <person name="Hikiji T."/>
            <person name="Kobatake N."/>
            <person name="Inagaki H."/>
            <person name="Ikema Y."/>
            <person name="Okamoto S."/>
            <person name="Okitani R."/>
            <person name="Kawakami T."/>
            <person name="Noguchi S."/>
            <person name="Itoh T."/>
            <person name="Shigeta K."/>
            <person name="Senba T."/>
            <person name="Matsumura K."/>
            <person name="Nakajima Y."/>
            <person name="Mizuno T."/>
            <person name="Morinaga M."/>
            <person name="Sasaki M."/>
            <person name="Togashi T."/>
            <person name="Oyama M."/>
            <person name="Hata H."/>
            <person name="Watanabe M."/>
            <person name="Komatsu T."/>
            <person name="Mizushima-Sugano J."/>
            <person name="Satoh T."/>
            <person name="Shirai Y."/>
            <person name="Takahashi Y."/>
            <person name="Nakagawa K."/>
            <person name="Okumura K."/>
            <person name="Nagase T."/>
            <person name="Nomura N."/>
            <person name="Kikuchi H."/>
            <person name="Masuho Y."/>
            <person name="Yamashita R."/>
            <person name="Nakai K."/>
            <person name="Yada T."/>
            <person name="Nakamura Y."/>
            <person name="Ohara O."/>
            <person name="Isogai T."/>
            <person name="Sugano S."/>
        </authorList>
    </citation>
    <scope>NUCLEOTIDE SEQUENCE [LARGE SCALE MRNA] (ISOFORM 1)</scope>
    <source>
        <tissue>Placenta</tissue>
    </source>
</reference>
<reference key="3">
    <citation type="journal article" date="2004" name="Nature">
        <title>The sequence and analysis of duplication-rich human chromosome 16.</title>
        <authorList>
            <person name="Martin J."/>
            <person name="Han C."/>
            <person name="Gordon L.A."/>
            <person name="Terry A."/>
            <person name="Prabhakar S."/>
            <person name="She X."/>
            <person name="Xie G."/>
            <person name="Hellsten U."/>
            <person name="Chan Y.M."/>
            <person name="Altherr M."/>
            <person name="Couronne O."/>
            <person name="Aerts A."/>
            <person name="Bajorek E."/>
            <person name="Black S."/>
            <person name="Blumer H."/>
            <person name="Branscomb E."/>
            <person name="Brown N.C."/>
            <person name="Bruno W.J."/>
            <person name="Buckingham J.M."/>
            <person name="Callen D.F."/>
            <person name="Campbell C.S."/>
            <person name="Campbell M.L."/>
            <person name="Campbell E.W."/>
            <person name="Caoile C."/>
            <person name="Challacombe J.F."/>
            <person name="Chasteen L.A."/>
            <person name="Chertkov O."/>
            <person name="Chi H.C."/>
            <person name="Christensen M."/>
            <person name="Clark L.M."/>
            <person name="Cohn J.D."/>
            <person name="Denys M."/>
            <person name="Detter J.C."/>
            <person name="Dickson M."/>
            <person name="Dimitrijevic-Bussod M."/>
            <person name="Escobar J."/>
            <person name="Fawcett J.J."/>
            <person name="Flowers D."/>
            <person name="Fotopulos D."/>
            <person name="Glavina T."/>
            <person name="Gomez M."/>
            <person name="Gonzales E."/>
            <person name="Goodstein D."/>
            <person name="Goodwin L.A."/>
            <person name="Grady D.L."/>
            <person name="Grigoriev I."/>
            <person name="Groza M."/>
            <person name="Hammon N."/>
            <person name="Hawkins T."/>
            <person name="Haydu L."/>
            <person name="Hildebrand C.E."/>
            <person name="Huang W."/>
            <person name="Israni S."/>
            <person name="Jett J."/>
            <person name="Jewett P.B."/>
            <person name="Kadner K."/>
            <person name="Kimball H."/>
            <person name="Kobayashi A."/>
            <person name="Krawczyk M.-C."/>
            <person name="Leyba T."/>
            <person name="Longmire J.L."/>
            <person name="Lopez F."/>
            <person name="Lou Y."/>
            <person name="Lowry S."/>
            <person name="Ludeman T."/>
            <person name="Manohar C.F."/>
            <person name="Mark G.A."/>
            <person name="McMurray K.L."/>
            <person name="Meincke L.J."/>
            <person name="Morgan J."/>
            <person name="Moyzis R.K."/>
            <person name="Mundt M.O."/>
            <person name="Munk A.C."/>
            <person name="Nandkeshwar R.D."/>
            <person name="Pitluck S."/>
            <person name="Pollard M."/>
            <person name="Predki P."/>
            <person name="Parson-Quintana B."/>
            <person name="Ramirez L."/>
            <person name="Rash S."/>
            <person name="Retterer J."/>
            <person name="Ricke D.O."/>
            <person name="Robinson D.L."/>
            <person name="Rodriguez A."/>
            <person name="Salamov A."/>
            <person name="Saunders E.H."/>
            <person name="Scott D."/>
            <person name="Shough T."/>
            <person name="Stallings R.L."/>
            <person name="Stalvey M."/>
            <person name="Sutherland R.D."/>
            <person name="Tapia R."/>
            <person name="Tesmer J.G."/>
            <person name="Thayer N."/>
            <person name="Thompson L.S."/>
            <person name="Tice H."/>
            <person name="Torney D.C."/>
            <person name="Tran-Gyamfi M."/>
            <person name="Tsai M."/>
            <person name="Ulanovsky L.E."/>
            <person name="Ustaszewska A."/>
            <person name="Vo N."/>
            <person name="White P.S."/>
            <person name="Williams A.L."/>
            <person name="Wills P.L."/>
            <person name="Wu J.-R."/>
            <person name="Wu K."/>
            <person name="Yang J."/>
            <person name="DeJong P."/>
            <person name="Bruce D."/>
            <person name="Doggett N.A."/>
            <person name="Deaven L."/>
            <person name="Schmutz J."/>
            <person name="Grimwood J."/>
            <person name="Richardson P."/>
            <person name="Rokhsar D.S."/>
            <person name="Eichler E.E."/>
            <person name="Gilna P."/>
            <person name="Lucas S.M."/>
            <person name="Myers R.M."/>
            <person name="Rubin E.M."/>
            <person name="Pennacchio L.A."/>
        </authorList>
    </citation>
    <scope>NUCLEOTIDE SEQUENCE [LARGE SCALE GENOMIC DNA]</scope>
</reference>
<reference key="4">
    <citation type="submission" date="2005-07" db="EMBL/GenBank/DDBJ databases">
        <authorList>
            <person name="Mural R.J."/>
            <person name="Istrail S."/>
            <person name="Sutton G."/>
            <person name="Florea L."/>
            <person name="Halpern A.L."/>
            <person name="Mobarry C.M."/>
            <person name="Lippert R."/>
            <person name="Walenz B."/>
            <person name="Shatkay H."/>
            <person name="Dew I."/>
            <person name="Miller J.R."/>
            <person name="Flanigan M.J."/>
            <person name="Edwards N.J."/>
            <person name="Bolanos R."/>
            <person name="Fasulo D."/>
            <person name="Halldorsson B.V."/>
            <person name="Hannenhalli S."/>
            <person name="Turner R."/>
            <person name="Yooseph S."/>
            <person name="Lu F."/>
            <person name="Nusskern D.R."/>
            <person name="Shue B.C."/>
            <person name="Zheng X.H."/>
            <person name="Zhong F."/>
            <person name="Delcher A.L."/>
            <person name="Huson D.H."/>
            <person name="Kravitz S.A."/>
            <person name="Mouchard L."/>
            <person name="Reinert K."/>
            <person name="Remington K.A."/>
            <person name="Clark A.G."/>
            <person name="Waterman M.S."/>
            <person name="Eichler E.E."/>
            <person name="Adams M.D."/>
            <person name="Hunkapiller M.W."/>
            <person name="Myers E.W."/>
            <person name="Venter J.C."/>
        </authorList>
    </citation>
    <scope>NUCLEOTIDE SEQUENCE [LARGE SCALE GENOMIC DNA]</scope>
</reference>
<reference key="5">
    <citation type="journal article" date="2004" name="Genome Res.">
        <title>The status, quality, and expansion of the NIH full-length cDNA project: the Mammalian Gene Collection (MGC).</title>
        <authorList>
            <consortium name="The MGC Project Team"/>
        </authorList>
    </citation>
    <scope>NUCLEOTIDE SEQUENCE [LARGE SCALE MRNA] (ISOFORM 1)</scope>
    <source>
        <tissue>Uterus</tissue>
    </source>
</reference>
<reference key="6">
    <citation type="journal article" date="2005" name="J. Biol. Chem.">
        <title>A mammalian chromatin remodeling complex with similarities to the yeast INO80 complex.</title>
        <authorList>
            <person name="Jin J."/>
            <person name="Cai Y."/>
            <person name="Yao T."/>
            <person name="Gottschalk A.J."/>
            <person name="Florens L."/>
            <person name="Swanson S.K."/>
            <person name="Gutierrez J.L."/>
            <person name="Coleman M.K."/>
            <person name="Workman J.L."/>
            <person name="Mushegian A."/>
            <person name="Washburn M.P."/>
            <person name="Conaway R.C."/>
            <person name="Conaway J.W."/>
        </authorList>
    </citation>
    <scope>IDENTIFICATION IN INO80 COMPLEX</scope>
    <scope>IDENTIFICATION BY MASS SPECTROMETRY</scope>
</reference>
<reference key="7">
    <citation type="journal article" date="2008" name="Mol. Cell">
        <title>Distinct modes of regulation of the Uch37 deubiquitinating enzyme in the proteasome and in the Ino80 chromatin-remodeling complex.</title>
        <authorList>
            <person name="Yao T."/>
            <person name="Song L."/>
            <person name="Jin J."/>
            <person name="Cai Y."/>
            <person name="Takahashi H."/>
            <person name="Swanson S.K."/>
            <person name="Washburn M.P."/>
            <person name="Florens L."/>
            <person name="Conaway R.C."/>
            <person name="Cohen R.E."/>
            <person name="Conaway J.W."/>
        </authorList>
    </citation>
    <scope>IDENTIFICATION IN THE INO80 COMPLEX</scope>
    <scope>SUBCELLULAR LOCATION</scope>
    <scope>IDENTIFICATION BY MASS SPECTROMETRY</scope>
</reference>
<reference key="8">
    <citation type="journal article" date="2011" name="J. Biol. Chem.">
        <title>Subunit organization of the human INO80 chromatin remodeling complex: An evolutionarily conserved core complex catalyzes ATP-dependent nucleosome remodeling.</title>
        <authorList>
            <person name="Chen L."/>
            <person name="Cai Y."/>
            <person name="Jin J."/>
            <person name="Florens L."/>
            <person name="Swanson S.K."/>
            <person name="Washburn M.P."/>
            <person name="Conaway J.W."/>
            <person name="Conaway R.C."/>
        </authorList>
    </citation>
    <scope>IDENTIFICATION IN THE INO80 COMPLEX</scope>
</reference>
<reference key="9">
    <citation type="journal article" date="2017" name="Nat. Struct. Mol. Biol.">
        <title>Site-specific mapping of the human SUMO proteome reveals co-modification with phosphorylation.</title>
        <authorList>
            <person name="Hendriks I.A."/>
            <person name="Lyon D."/>
            <person name="Young C."/>
            <person name="Jensen L.J."/>
            <person name="Vertegaal A.C."/>
            <person name="Nielsen M.L."/>
        </authorList>
    </citation>
    <scope>SUMOYLATION [LARGE SCALE ANALYSIS] AT LYS-159 AND LYS-171</scope>
    <scope>IDENTIFICATION BY MASS SPECTROMETRY [LARGE SCALE ANALYSIS]</scope>
</reference>
<sequence length="244" mass="26478">MNGPADGEVDYKKKYRNLKRKLKFLIYEHECFQEELRKAQRKLLKVSRDKSFLLDRLLQYENVDEDSSDSDATASSDNSETEGTPKLSDTPAPKRKRSPPLGGAPSPSSLSLPPSTGFPLQASGVPSPYLSSLASSRYPPFPSDYLALQLPEPSPLRPKREKRPRLPRKLKMAVGPPDCPVGGPLTFPGRGSGAGVGTTLTPLPPPKMPPPTILSTVPRQMFSDAGSGDDALDGDDDLVIDIPE</sequence>
<name>IN80E_HUMAN</name>
<comment type="function">
    <text>Putative regulatory component of the chromatin remodeling INO80 complex which is involved in transcriptional regulation, DNA replication and probably DNA repair.</text>
</comment>
<comment type="subunit">
    <text evidence="3 4 5">Component of the chromatin remodeling INO80 complex; specifically part of a complex module associated with the N-terminus of INO80.</text>
</comment>
<comment type="interaction">
    <interactant intactId="EBI-769401">
        <id>Q8NBZ0</id>
    </interactant>
    <interactant intactId="EBI-396137">
        <id>Q9UJX2</id>
        <label>CDC23</label>
    </interactant>
    <organismsDiffer>false</organismsDiffer>
    <experiments>3</experiments>
</comment>
<comment type="interaction">
    <interactant intactId="EBI-769401">
        <id>Q8NBZ0</id>
    </interactant>
    <interactant intactId="EBI-744506">
        <id>Q86V42</id>
        <label>FAM124A</label>
    </interactant>
    <organismsDiffer>false</organismsDiffer>
    <experiments>3</experiments>
</comment>
<comment type="interaction">
    <interactant intactId="EBI-769401">
        <id>Q8NBZ0</id>
    </interactant>
    <interactant intactId="EBI-719941">
        <id>Q3B820</id>
        <label>FAM161A</label>
    </interactant>
    <organismsDiffer>false</organismsDiffer>
    <experiments>3</experiments>
</comment>
<comment type="interaction">
    <interactant intactId="EBI-769401">
        <id>Q8NBZ0</id>
    </interactant>
    <interactant intactId="EBI-744104">
        <id>P55040</id>
        <label>GEM</label>
    </interactant>
    <organismsDiffer>false</organismsDiffer>
    <experiments>6</experiments>
</comment>
<comment type="interaction">
    <interactant intactId="EBI-769401">
        <id>Q8NBZ0</id>
    </interactant>
    <interactant intactId="EBI-466029">
        <id>P42858</id>
        <label>HTT</label>
    </interactant>
    <organismsDiffer>false</organismsDiffer>
    <experiments>3</experiments>
</comment>
<comment type="interaction">
    <interactant intactId="EBI-769401">
        <id>Q8NBZ0</id>
    </interactant>
    <interactant intactId="EBI-349938">
        <id>P52292</id>
        <label>KPNA2</label>
    </interactant>
    <organismsDiffer>false</organismsDiffer>
    <experiments>3</experiments>
</comment>
<comment type="interaction">
    <interactant intactId="EBI-769401">
        <id>Q8NBZ0</id>
    </interactant>
    <interactant intactId="EBI-739832">
        <id>Q8TBB1</id>
        <label>LNX1</label>
    </interactant>
    <organismsDiffer>false</organismsDiffer>
    <experiments>3</experiments>
</comment>
<comment type="interaction">
    <interactant intactId="EBI-769401">
        <id>Q8NBZ0</id>
    </interactant>
    <interactant intactId="EBI-10268010">
        <id>Q8N8X9</id>
        <label>MAB21L3</label>
    </interactant>
    <organismsDiffer>false</organismsDiffer>
    <experiments>3</experiments>
</comment>
<comment type="interaction">
    <interactant intactId="EBI-769401">
        <id>Q8NBZ0</id>
    </interactant>
    <interactant intactId="EBI-348259">
        <id>Q96EZ8</id>
        <label>MCRS1</label>
    </interactant>
    <organismsDiffer>false</organismsDiffer>
    <experiments>11</experiments>
</comment>
<comment type="interaction">
    <interactant intactId="EBI-769401">
        <id>Q8NBZ0</id>
    </interactant>
    <interactant intactId="EBI-10269566">
        <id>Q8NDC4</id>
        <label>MORN4</label>
    </interactant>
    <organismsDiffer>false</organismsDiffer>
    <experiments>3</experiments>
</comment>
<comment type="interaction">
    <interactant intactId="EBI-769401">
        <id>Q8NBZ0</id>
    </interactant>
    <interactant intactId="EBI-2339674">
        <id>Q5T6S3</id>
        <label>PHF19</label>
    </interactant>
    <organismsDiffer>false</organismsDiffer>
    <experiments>3</experiments>
</comment>
<comment type="interaction">
    <interactant intactId="EBI-769401">
        <id>Q8NBZ0</id>
    </interactant>
    <interactant intactId="EBI-79165">
        <id>Q9NRD5</id>
        <label>PICK1</label>
    </interactant>
    <organismsDiffer>false</organismsDiffer>
    <experiments>3</experiments>
</comment>
<comment type="interaction">
    <interactant intactId="EBI-769401">
        <id>Q8NBZ0</id>
    </interactant>
    <interactant intactId="EBI-714158">
        <id>Q13526</id>
        <label>PIN1</label>
    </interactant>
    <organismsDiffer>false</organismsDiffer>
    <experiments>3</experiments>
</comment>
<comment type="interaction">
    <interactant intactId="EBI-769401">
        <id>Q8NBZ0</id>
    </interactant>
    <interactant intactId="EBI-1181405">
        <id>Q13131</id>
        <label>PRKAA1</label>
    </interactant>
    <organismsDiffer>false</organismsDiffer>
    <experiments>3</experiments>
</comment>
<comment type="interaction">
    <interactant intactId="EBI-769401">
        <id>Q8NBZ0</id>
    </interactant>
    <interactant intactId="EBI-359352">
        <id>P25786</id>
        <label>PSMA1</label>
    </interactant>
    <organismsDiffer>false</organismsDiffer>
    <experiments>3</experiments>
</comment>
<comment type="interaction">
    <interactant intactId="EBI-769401">
        <id>Q8NBZ0</id>
    </interactant>
    <interactant intactId="EBI-727004">
        <id>O00560</id>
        <label>SDCBP</label>
    </interactant>
    <organismsDiffer>false</organismsDiffer>
    <experiments>6</experiments>
</comment>
<comment type="interaction">
    <interactant intactId="EBI-769401">
        <id>Q8NBZ0</id>
    </interactant>
    <interactant intactId="EBI-10223693">
        <id>Q05BL0</id>
        <label>TBRG1</label>
    </interactant>
    <organismsDiffer>false</organismsDiffer>
    <experiments>3</experiments>
</comment>
<comment type="interaction">
    <interactant intactId="EBI-769401">
        <id>Q8NBZ0</id>
    </interactant>
    <interactant intactId="EBI-11741437">
        <id>Q08117-2</id>
        <label>TLE5</label>
    </interactant>
    <organismsDiffer>false</organismsDiffer>
    <experiments>3</experiments>
</comment>
<comment type="interaction">
    <interactant intactId="EBI-769401">
        <id>Q8NBZ0</id>
    </interactant>
    <interactant intactId="EBI-1049336">
        <id>O95379</id>
        <label>TNFAIP8</label>
    </interactant>
    <organismsDiffer>false</organismsDiffer>
    <experiments>3</experiments>
</comment>
<comment type="interaction">
    <interactant intactId="EBI-769401">
        <id>Q8NBZ0</id>
    </interactant>
    <interactant intactId="EBI-1051183">
        <id>Q9Y5K5</id>
        <label>UCHL5</label>
    </interactant>
    <organismsDiffer>false</organismsDiffer>
    <experiments>10</experiments>
</comment>
<comment type="subcellular location">
    <subcellularLocation>
        <location evidence="4">Nucleus</location>
    </subcellularLocation>
</comment>
<comment type="alternative products">
    <event type="alternative splicing"/>
    <isoform>
        <id>Q8NBZ0-1</id>
        <name>1</name>
        <sequence type="displayed"/>
    </isoform>
    <isoform>
        <id>Q8NBZ0-2</id>
        <name>2</name>
        <sequence type="described" ref="VSP_055984"/>
    </isoform>
</comment>
<evidence type="ECO:0000255" key="1"/>
<evidence type="ECO:0000256" key="2">
    <source>
        <dbReference type="SAM" id="MobiDB-lite"/>
    </source>
</evidence>
<evidence type="ECO:0000269" key="3">
    <source>
    </source>
</evidence>
<evidence type="ECO:0000269" key="4">
    <source>
    </source>
</evidence>
<evidence type="ECO:0000269" key="5">
    <source>
    </source>
</evidence>
<evidence type="ECO:0000303" key="6">
    <source ref="1"/>
</evidence>
<evidence type="ECO:0007744" key="7">
    <source>
    </source>
</evidence>
<dbReference type="EMBL" id="AY189289">
    <property type="protein sequence ID" value="AAO86733.1"/>
    <property type="molecule type" value="mRNA"/>
</dbReference>
<dbReference type="EMBL" id="AK075133">
    <property type="protein sequence ID" value="BAC11424.1"/>
    <property type="molecule type" value="mRNA"/>
</dbReference>
<dbReference type="EMBL" id="AC093512">
    <property type="status" value="NOT_ANNOTATED_CDS"/>
    <property type="molecule type" value="Genomic_DNA"/>
</dbReference>
<dbReference type="EMBL" id="CH471238">
    <property type="protein sequence ID" value="EAW79953.1"/>
    <property type="molecule type" value="Genomic_DNA"/>
</dbReference>
<dbReference type="EMBL" id="CH471238">
    <property type="protein sequence ID" value="EAW79956.1"/>
    <property type="molecule type" value="Genomic_DNA"/>
</dbReference>
<dbReference type="EMBL" id="CH471238">
    <property type="protein sequence ID" value="EAW79959.1"/>
    <property type="molecule type" value="Genomic_DNA"/>
</dbReference>
<dbReference type="EMBL" id="BC047712">
    <property type="protein sequence ID" value="AAH47712.1"/>
    <property type="molecule type" value="mRNA"/>
</dbReference>
<dbReference type="CCDS" id="CCDS10665.1">
    <molecule id="Q8NBZ0-1"/>
</dbReference>
<dbReference type="RefSeq" id="NP_001291491.1">
    <property type="nucleotide sequence ID" value="NM_001304562.1"/>
</dbReference>
<dbReference type="RefSeq" id="NP_001291492.1">
    <property type="nucleotide sequence ID" value="NM_001304563.1"/>
</dbReference>
<dbReference type="RefSeq" id="NP_775889.1">
    <molecule id="Q8NBZ0-1"/>
    <property type="nucleotide sequence ID" value="NM_173618.3"/>
</dbReference>
<dbReference type="RefSeq" id="XP_047289945.1">
    <molecule id="Q8NBZ0-2"/>
    <property type="nucleotide sequence ID" value="XM_047433989.1"/>
</dbReference>
<dbReference type="RefSeq" id="XP_054236117.1">
    <molecule id="Q8NBZ0-2"/>
    <property type="nucleotide sequence ID" value="XM_054380142.1"/>
</dbReference>
<dbReference type="SMR" id="Q8NBZ0"/>
<dbReference type="BioGRID" id="129701">
    <property type="interactions" value="81"/>
</dbReference>
<dbReference type="ComplexPortal" id="CPX-846">
    <property type="entry name" value="INO80 chromatin remodeling complex"/>
</dbReference>
<dbReference type="CORUM" id="Q8NBZ0"/>
<dbReference type="FunCoup" id="Q8NBZ0">
    <property type="interactions" value="1656"/>
</dbReference>
<dbReference type="IntAct" id="Q8NBZ0">
    <property type="interactions" value="67"/>
</dbReference>
<dbReference type="MINT" id="Q8NBZ0"/>
<dbReference type="STRING" id="9606.ENSP00000457016"/>
<dbReference type="iPTMnet" id="Q8NBZ0"/>
<dbReference type="PhosphoSitePlus" id="Q8NBZ0"/>
<dbReference type="BioMuta" id="INO80E"/>
<dbReference type="DMDM" id="74730149"/>
<dbReference type="jPOST" id="Q8NBZ0"/>
<dbReference type="MassIVE" id="Q8NBZ0"/>
<dbReference type="PaxDb" id="9606-ENSP00000457016"/>
<dbReference type="PeptideAtlas" id="Q8NBZ0"/>
<dbReference type="ProteomicsDB" id="67833"/>
<dbReference type="ProteomicsDB" id="72835">
    <molecule id="Q8NBZ0-1"/>
</dbReference>
<dbReference type="Pumba" id="Q8NBZ0"/>
<dbReference type="Antibodypedia" id="51751">
    <property type="antibodies" value="31 antibodies from 9 providers"/>
</dbReference>
<dbReference type="DNASU" id="283899"/>
<dbReference type="Ensembl" id="ENST00000562441.5">
    <molecule id="Q8NBZ0-2"/>
    <property type="protein sequence ID" value="ENSP00000456073.1"/>
    <property type="gene ID" value="ENSG00000169592.15"/>
</dbReference>
<dbReference type="Ensembl" id="ENST00000563197.6">
    <molecule id="Q8NBZ0-1"/>
    <property type="protein sequence ID" value="ENSP00000457016.1"/>
    <property type="gene ID" value="ENSG00000169592.15"/>
</dbReference>
<dbReference type="Ensembl" id="ENST00000567065.5">
    <molecule id="Q8NBZ0-2"/>
    <property type="protein sequence ID" value="ENSP00000454665.1"/>
    <property type="gene ID" value="ENSG00000169592.15"/>
</dbReference>
<dbReference type="Ensembl" id="ENST00000620599.4">
    <molecule id="Q8NBZ0-2"/>
    <property type="protein sequence ID" value="ENSP00000484187.1"/>
    <property type="gene ID" value="ENSG00000169592.15"/>
</dbReference>
<dbReference type="GeneID" id="283899"/>
<dbReference type="KEGG" id="hsa:283899"/>
<dbReference type="MANE-Select" id="ENST00000563197.6">
    <property type="protein sequence ID" value="ENSP00000457016.1"/>
    <property type="RefSeq nucleotide sequence ID" value="NM_173618.3"/>
    <property type="RefSeq protein sequence ID" value="NP_775889.1"/>
</dbReference>
<dbReference type="UCSC" id="uc002dvg.2">
    <molecule id="Q8NBZ0-1"/>
    <property type="organism name" value="human"/>
</dbReference>
<dbReference type="AGR" id="HGNC:26905"/>
<dbReference type="CTD" id="283899"/>
<dbReference type="DisGeNET" id="283899"/>
<dbReference type="GeneCards" id="INO80E"/>
<dbReference type="HGNC" id="HGNC:26905">
    <property type="gene designation" value="INO80E"/>
</dbReference>
<dbReference type="HPA" id="ENSG00000169592">
    <property type="expression patterns" value="Low tissue specificity"/>
</dbReference>
<dbReference type="neXtProt" id="NX_Q8NBZ0"/>
<dbReference type="OpenTargets" id="ENSG00000169592"/>
<dbReference type="PharmGKB" id="PA162392174"/>
<dbReference type="VEuPathDB" id="HostDB:ENSG00000169592"/>
<dbReference type="eggNOG" id="ENOG502RZ5F">
    <property type="taxonomic scope" value="Eukaryota"/>
</dbReference>
<dbReference type="GeneTree" id="ENSGT00390000011918"/>
<dbReference type="InParanoid" id="Q8NBZ0"/>
<dbReference type="OMA" id="FSWVPKQ"/>
<dbReference type="OrthoDB" id="5977486at2759"/>
<dbReference type="PAN-GO" id="Q8NBZ0">
    <property type="GO annotations" value="1 GO annotation based on evolutionary models"/>
</dbReference>
<dbReference type="PhylomeDB" id="Q8NBZ0"/>
<dbReference type="TreeFam" id="TF326931"/>
<dbReference type="PathwayCommons" id="Q8NBZ0"/>
<dbReference type="Reactome" id="R-HSA-5689603">
    <property type="pathway name" value="UCH proteinases"/>
</dbReference>
<dbReference type="Reactome" id="R-HSA-5696394">
    <property type="pathway name" value="DNA Damage Recognition in GG-NER"/>
</dbReference>
<dbReference type="SignaLink" id="Q8NBZ0"/>
<dbReference type="SIGNOR" id="Q8NBZ0"/>
<dbReference type="BioGRID-ORCS" id="283899">
    <property type="hits" value="54 hits in 1171 CRISPR screens"/>
</dbReference>
<dbReference type="CD-CODE" id="B5B9A610">
    <property type="entry name" value="PML body"/>
</dbReference>
<dbReference type="ChiTaRS" id="INO80E">
    <property type="organism name" value="human"/>
</dbReference>
<dbReference type="GenomeRNAi" id="283899"/>
<dbReference type="Pharos" id="Q8NBZ0">
    <property type="development level" value="Tdark"/>
</dbReference>
<dbReference type="PRO" id="PR:Q8NBZ0"/>
<dbReference type="Proteomes" id="UP000005640">
    <property type="component" value="Chromosome 16"/>
</dbReference>
<dbReference type="RNAct" id="Q8NBZ0">
    <property type="molecule type" value="protein"/>
</dbReference>
<dbReference type="Bgee" id="ENSG00000169592">
    <property type="expression patterns" value="Expressed in granulocyte and 168 other cell types or tissues"/>
</dbReference>
<dbReference type="ExpressionAtlas" id="Q8NBZ0">
    <property type="expression patterns" value="baseline and differential"/>
</dbReference>
<dbReference type="GO" id="GO:0031011">
    <property type="term" value="C:Ino80 complex"/>
    <property type="evidence" value="ECO:0000314"/>
    <property type="project" value="UniProtKB"/>
</dbReference>
<dbReference type="GO" id="GO:0005730">
    <property type="term" value="C:nucleolus"/>
    <property type="evidence" value="ECO:0000314"/>
    <property type="project" value="HPA"/>
</dbReference>
<dbReference type="GO" id="GO:0005654">
    <property type="term" value="C:nucleoplasm"/>
    <property type="evidence" value="ECO:0000314"/>
    <property type="project" value="HPA"/>
</dbReference>
<dbReference type="GO" id="GO:0006338">
    <property type="term" value="P:chromatin remodeling"/>
    <property type="evidence" value="ECO:0000314"/>
    <property type="project" value="ComplexPortal"/>
</dbReference>
<dbReference type="GO" id="GO:0006310">
    <property type="term" value="P:DNA recombination"/>
    <property type="evidence" value="ECO:0007669"/>
    <property type="project" value="UniProtKB-KW"/>
</dbReference>
<dbReference type="GO" id="GO:0006281">
    <property type="term" value="P:DNA repair"/>
    <property type="evidence" value="ECO:0007669"/>
    <property type="project" value="UniProtKB-KW"/>
</dbReference>
<dbReference type="GO" id="GO:0045739">
    <property type="term" value="P:positive regulation of DNA repair"/>
    <property type="evidence" value="ECO:0000266"/>
    <property type="project" value="ComplexPortal"/>
</dbReference>
<dbReference type="GO" id="GO:0045893">
    <property type="term" value="P:positive regulation of DNA-templated transcription"/>
    <property type="evidence" value="ECO:0000315"/>
    <property type="project" value="ComplexPortal"/>
</dbReference>
<dbReference type="GO" id="GO:1904507">
    <property type="term" value="P:positive regulation of telomere maintenance in response to DNA damage"/>
    <property type="evidence" value="ECO:0000266"/>
    <property type="project" value="ComplexPortal"/>
</dbReference>
<dbReference type="GO" id="GO:0051726">
    <property type="term" value="P:regulation of cell cycle"/>
    <property type="evidence" value="ECO:0000315"/>
    <property type="project" value="ComplexPortal"/>
</dbReference>
<dbReference type="GO" id="GO:0033044">
    <property type="term" value="P:regulation of chromosome organization"/>
    <property type="evidence" value="ECO:0000315"/>
    <property type="project" value="ComplexPortal"/>
</dbReference>
<dbReference type="GO" id="GO:0006282">
    <property type="term" value="P:regulation of DNA repair"/>
    <property type="evidence" value="ECO:0000266"/>
    <property type="project" value="ComplexPortal"/>
</dbReference>
<dbReference type="GO" id="GO:0006275">
    <property type="term" value="P:regulation of DNA replication"/>
    <property type="evidence" value="ECO:0000315"/>
    <property type="project" value="ComplexPortal"/>
</dbReference>
<dbReference type="GO" id="GO:0060382">
    <property type="term" value="P:regulation of DNA strand elongation"/>
    <property type="evidence" value="ECO:0000315"/>
    <property type="project" value="ComplexPortal"/>
</dbReference>
<dbReference type="GO" id="GO:0045995">
    <property type="term" value="P:regulation of embryonic development"/>
    <property type="evidence" value="ECO:0000266"/>
    <property type="project" value="ComplexPortal"/>
</dbReference>
<dbReference type="GO" id="GO:0000723">
    <property type="term" value="P:telomere maintenance"/>
    <property type="evidence" value="ECO:0000266"/>
    <property type="project" value="ComplexPortal"/>
</dbReference>
<dbReference type="InterPro" id="IPR026678">
    <property type="entry name" value="INO80E"/>
</dbReference>
<dbReference type="InterPro" id="IPR056515">
    <property type="entry name" value="INO80E_N"/>
</dbReference>
<dbReference type="PANTHER" id="PTHR21812">
    <property type="entry name" value="INO80 COMPLEX SUBUNIT E"/>
    <property type="match status" value="1"/>
</dbReference>
<dbReference type="PANTHER" id="PTHR21812:SF1">
    <property type="entry name" value="INO80 COMPLEX SUBUNIT E"/>
    <property type="match status" value="1"/>
</dbReference>
<dbReference type="Pfam" id="PF24237">
    <property type="entry name" value="INO80E"/>
    <property type="match status" value="1"/>
</dbReference>
<protein>
    <recommendedName>
        <fullName>INO80 complex subunit E</fullName>
    </recommendedName>
    <alternativeName>
        <fullName>Coiled-coil domain-containing protein 95</fullName>
    </alternativeName>
</protein>
<gene>
    <name type="primary">INO80E</name>
    <name type="synonym">CCDC95</name>
</gene>
<organism>
    <name type="scientific">Homo sapiens</name>
    <name type="common">Human</name>
    <dbReference type="NCBI Taxonomy" id="9606"/>
    <lineage>
        <taxon>Eukaryota</taxon>
        <taxon>Metazoa</taxon>
        <taxon>Chordata</taxon>
        <taxon>Craniata</taxon>
        <taxon>Vertebrata</taxon>
        <taxon>Euteleostomi</taxon>
        <taxon>Mammalia</taxon>
        <taxon>Eutheria</taxon>
        <taxon>Euarchontoglires</taxon>
        <taxon>Primates</taxon>
        <taxon>Haplorrhini</taxon>
        <taxon>Catarrhini</taxon>
        <taxon>Hominidae</taxon>
        <taxon>Homo</taxon>
    </lineage>
</organism>
<accession>Q8NBZ0</accession>
<accession>Q6Y2K3</accession>
<feature type="chain" id="PRO_0000234292" description="INO80 complex subunit E">
    <location>
        <begin position="1"/>
        <end position="244"/>
    </location>
</feature>
<feature type="region of interest" description="Disordered" evidence="2">
    <location>
        <begin position="63"/>
        <end position="236"/>
    </location>
</feature>
<feature type="coiled-coil region" evidence="1">
    <location>
        <begin position="10"/>
        <end position="54"/>
    </location>
</feature>
<feature type="compositionally biased region" description="Low complexity" evidence="2">
    <location>
        <begin position="99"/>
        <end position="115"/>
    </location>
</feature>
<feature type="compositionally biased region" description="Basic residues" evidence="2">
    <location>
        <begin position="157"/>
        <end position="171"/>
    </location>
</feature>
<feature type="compositionally biased region" description="Pro residues" evidence="2">
    <location>
        <begin position="202"/>
        <end position="212"/>
    </location>
</feature>
<feature type="cross-link" description="Glycyl lysine isopeptide (Lys-Gly) (interchain with G-Cter in SUMO2)" evidence="7">
    <location>
        <position position="159"/>
    </location>
</feature>
<feature type="cross-link" description="Glycyl lysine isopeptide (Lys-Gly) (interchain with G-Cter in SUMO2)" evidence="7">
    <location>
        <position position="171"/>
    </location>
</feature>
<feature type="splice variant" id="VSP_055984" description="In isoform 2." evidence="6">
    <original>LASSRYPPFPSDYLALQLPEPSPLRPKREKRPRLPRKLKMAVGPPDCPVGGPLTFPGRGSGAGVGTTLTPLPPPKMPPPTILSTVPRQMFSDAGSGDDALDGDDDLVIDIPE</original>
    <variation>ERGQA</variation>
    <location>
        <begin position="133"/>
        <end position="244"/>
    </location>
</feature>